<dbReference type="EC" id="3.2.1.52" evidence="1"/>
<dbReference type="EMBL" id="GT277795">
    <property type="status" value="NOT_ANNOTATED_CDS"/>
    <property type="molecule type" value="mRNA"/>
</dbReference>
<dbReference type="EMBL" id="GT278040">
    <property type="status" value="NOT_ANNOTATED_CDS"/>
    <property type="molecule type" value="mRNA"/>
</dbReference>
<dbReference type="EMBL" id="GT278051">
    <property type="status" value="NOT_ANNOTATED_CDS"/>
    <property type="molecule type" value="mRNA"/>
</dbReference>
<dbReference type="EMBL" id="GT278127">
    <property type="status" value="NOT_ANNOTATED_CDS"/>
    <property type="molecule type" value="mRNA"/>
</dbReference>
<dbReference type="EMBL" id="GT278167">
    <property type="status" value="NOT_ANNOTATED_CDS"/>
    <property type="molecule type" value="mRNA"/>
</dbReference>
<dbReference type="EMBL" id="GT278276">
    <property type="status" value="NOT_ANNOTATED_CDS"/>
    <property type="molecule type" value="mRNA"/>
</dbReference>
<dbReference type="EMBL" id="GT278283">
    <property type="status" value="NOT_ANNOTATED_CDS"/>
    <property type="molecule type" value="mRNA"/>
</dbReference>
<dbReference type="EMBL" id="GT278457">
    <property type="status" value="NOT_ANNOTATED_CDS"/>
    <property type="molecule type" value="mRNA"/>
</dbReference>
<dbReference type="EMBL" id="GT278599">
    <property type="status" value="NOT_ANNOTATED_CDS"/>
    <property type="molecule type" value="mRNA"/>
</dbReference>
<dbReference type="EMBL" id="GT279087">
    <property type="status" value="NOT_ANNOTATED_CDS"/>
    <property type="molecule type" value="mRNA"/>
</dbReference>
<dbReference type="EMBL" id="GT279290">
    <property type="status" value="NOT_ANNOTATED_CDS"/>
    <property type="molecule type" value="mRNA"/>
</dbReference>
<dbReference type="EMBL" id="GT279353">
    <property type="status" value="NOT_ANNOTATED_CDS"/>
    <property type="molecule type" value="mRNA"/>
</dbReference>
<dbReference type="EMBL" id="GT279393">
    <property type="status" value="NOT_ANNOTATED_CDS"/>
    <property type="molecule type" value="mRNA"/>
</dbReference>
<dbReference type="EMBL" id="GT279548">
    <property type="status" value="NOT_ANNOTATED_CDS"/>
    <property type="molecule type" value="mRNA"/>
</dbReference>
<dbReference type="EMBL" id="GT279589">
    <property type="status" value="NOT_ANNOTATED_CDS"/>
    <property type="molecule type" value="mRNA"/>
</dbReference>
<dbReference type="EMBL" id="GT279825">
    <property type="status" value="NOT_ANNOTATED_CDS"/>
    <property type="molecule type" value="mRNA"/>
</dbReference>
<dbReference type="EMBL" id="GT279940">
    <property type="status" value="NOT_ANNOTATED_CDS"/>
    <property type="molecule type" value="mRNA"/>
</dbReference>
<dbReference type="EMBL" id="GT279953">
    <property type="status" value="NOT_ANNOTATED_CDS"/>
    <property type="molecule type" value="mRNA"/>
</dbReference>
<dbReference type="EMBL" id="GT280934">
    <property type="status" value="NOT_ANNOTATED_CDS"/>
    <property type="molecule type" value="mRNA"/>
</dbReference>
<dbReference type="EMBL" id="GT280997">
    <property type="status" value="NOT_ANNOTATED_CDS"/>
    <property type="molecule type" value="mRNA"/>
</dbReference>
<dbReference type="EMBL" id="GT281082">
    <property type="status" value="NOT_ANNOTATED_CDS"/>
    <property type="molecule type" value="mRNA"/>
</dbReference>
<dbReference type="EMBL" id="GT281097">
    <property type="status" value="NOT_ANNOTATED_CDS"/>
    <property type="molecule type" value="mRNA"/>
</dbReference>
<dbReference type="EMBL" id="GT281480">
    <property type="status" value="NOT_ANNOTATED_CDS"/>
    <property type="molecule type" value="mRNA"/>
</dbReference>
<dbReference type="EMBL" id="GT281527">
    <property type="status" value="NOT_ANNOTATED_CDS"/>
    <property type="molecule type" value="mRNA"/>
</dbReference>
<dbReference type="EMBL" id="GT281701">
    <property type="status" value="NOT_ANNOTATED_CDS"/>
    <property type="molecule type" value="mRNA"/>
</dbReference>
<dbReference type="EMBL" id="GT281791">
    <property type="status" value="NOT_ANNOTATED_CDS"/>
    <property type="molecule type" value="mRNA"/>
</dbReference>
<dbReference type="EMBL" id="GT281846">
    <property type="status" value="NOT_ANNOTATED_CDS"/>
    <property type="molecule type" value="mRNA"/>
</dbReference>
<dbReference type="EMBL" id="GT282021">
    <property type="status" value="NOT_ANNOTATED_CDS"/>
    <property type="molecule type" value="mRNA"/>
</dbReference>
<dbReference type="EMBL" id="GT282046">
    <property type="status" value="NOT_ANNOTATED_CDS"/>
    <property type="molecule type" value="mRNA"/>
</dbReference>
<dbReference type="EMBL" id="GT282050">
    <property type="status" value="NOT_ANNOTATED_CDS"/>
    <property type="molecule type" value="mRNA"/>
</dbReference>
<dbReference type="EMBL" id="GT282275">
    <property type="status" value="NOT_ANNOTATED_CDS"/>
    <property type="molecule type" value="mRNA"/>
</dbReference>
<dbReference type="EMBL" id="GT282639">
    <property type="status" value="NOT_ANNOTATED_CDS"/>
    <property type="molecule type" value="mRNA"/>
</dbReference>
<dbReference type="EMBL" id="GT282702">
    <property type="status" value="NOT_ANNOTATED_CDS"/>
    <property type="molecule type" value="mRNA"/>
</dbReference>
<dbReference type="EMBL" id="GT282719">
    <property type="status" value="NOT_ANNOTATED_CDS"/>
    <property type="molecule type" value="mRNA"/>
</dbReference>
<dbReference type="EMBL" id="GT282776">
    <property type="status" value="NOT_ANNOTATED_CDS"/>
    <property type="molecule type" value="mRNA"/>
</dbReference>
<dbReference type="EMBL" id="GT283348">
    <property type="status" value="NOT_ANNOTATED_CDS"/>
    <property type="molecule type" value="mRNA"/>
</dbReference>
<dbReference type="EMBL" id="GT283584">
    <property type="status" value="NOT_ANNOTATED_CDS"/>
    <property type="molecule type" value="mRNA"/>
</dbReference>
<dbReference type="EMBL" id="GT283781">
    <property type="status" value="NOT_ANNOTATED_CDS"/>
    <property type="molecule type" value="mRNA"/>
</dbReference>
<dbReference type="EMBL" id="GT284045">
    <property type="status" value="NOT_ANNOTATED_CDS"/>
    <property type="molecule type" value="mRNA"/>
</dbReference>
<dbReference type="EMBL" id="GT284443">
    <property type="status" value="NOT_ANNOTATED_CDS"/>
    <property type="molecule type" value="mRNA"/>
</dbReference>
<dbReference type="EMBL" id="EZ420123">
    <property type="status" value="NOT_ANNOTATED_CDS"/>
    <property type="molecule type" value="mRNA"/>
</dbReference>
<dbReference type="EMBL" id="EZ420192">
    <property type="status" value="NOT_ANNOTATED_CDS"/>
    <property type="molecule type" value="mRNA"/>
</dbReference>
<dbReference type="SMR" id="P86956"/>
<dbReference type="UniPathway" id="UPA00349"/>
<dbReference type="GO" id="GO:0005576">
    <property type="term" value="C:extracellular region"/>
    <property type="evidence" value="ECO:0007669"/>
    <property type="project" value="UniProtKB-SubCell"/>
</dbReference>
<dbReference type="GO" id="GO:0016020">
    <property type="term" value="C:membrane"/>
    <property type="evidence" value="ECO:0007669"/>
    <property type="project" value="TreeGrafter"/>
</dbReference>
<dbReference type="GO" id="GO:0004563">
    <property type="term" value="F:beta-N-acetylhexosaminidase activity"/>
    <property type="evidence" value="ECO:0007669"/>
    <property type="project" value="UniProtKB-EC"/>
</dbReference>
<dbReference type="GO" id="GO:0030247">
    <property type="term" value="F:polysaccharide binding"/>
    <property type="evidence" value="ECO:0007669"/>
    <property type="project" value="InterPro"/>
</dbReference>
<dbReference type="GO" id="GO:0005975">
    <property type="term" value="P:carbohydrate metabolic process"/>
    <property type="evidence" value="ECO:0007669"/>
    <property type="project" value="InterPro"/>
</dbReference>
<dbReference type="GO" id="GO:0006032">
    <property type="term" value="P:chitin catabolic process"/>
    <property type="evidence" value="ECO:0007669"/>
    <property type="project" value="UniProtKB-UniPathway"/>
</dbReference>
<dbReference type="GO" id="GO:0030203">
    <property type="term" value="P:glycosaminoglycan metabolic process"/>
    <property type="evidence" value="ECO:0007669"/>
    <property type="project" value="TreeGrafter"/>
</dbReference>
<dbReference type="Gene3D" id="2.60.40.290">
    <property type="match status" value="1"/>
</dbReference>
<dbReference type="Gene3D" id="3.30.379.10">
    <property type="entry name" value="Chitobiase/beta-hexosaminidase domain 2-like"/>
    <property type="match status" value="1"/>
</dbReference>
<dbReference type="Gene3D" id="3.20.20.80">
    <property type="entry name" value="Glycosidases"/>
    <property type="match status" value="1"/>
</dbReference>
<dbReference type="InterPro" id="IPR025705">
    <property type="entry name" value="Beta_hexosaminidase_sua/sub"/>
</dbReference>
<dbReference type="InterPro" id="IPR008965">
    <property type="entry name" value="CBM2/CBM3_carb-bd_dom_sf"/>
</dbReference>
<dbReference type="InterPro" id="IPR012291">
    <property type="entry name" value="CBM2_carb-bd_dom_sf"/>
</dbReference>
<dbReference type="InterPro" id="IPR004866">
    <property type="entry name" value="CHB/HEX_N_dom"/>
</dbReference>
<dbReference type="InterPro" id="IPR015883">
    <property type="entry name" value="Glyco_hydro_20_cat"/>
</dbReference>
<dbReference type="InterPro" id="IPR017853">
    <property type="entry name" value="Glycoside_hydrolase_SF"/>
</dbReference>
<dbReference type="InterPro" id="IPR029018">
    <property type="entry name" value="Hex-like_dom2"/>
</dbReference>
<dbReference type="PANTHER" id="PTHR22600">
    <property type="entry name" value="BETA-HEXOSAMINIDASE"/>
    <property type="match status" value="1"/>
</dbReference>
<dbReference type="PANTHER" id="PTHR22600:SF57">
    <property type="entry name" value="BETA-N-ACETYLHEXOSAMINIDASE"/>
    <property type="match status" value="1"/>
</dbReference>
<dbReference type="Pfam" id="PF03173">
    <property type="entry name" value="CHB_HEX"/>
    <property type="match status" value="1"/>
</dbReference>
<dbReference type="Pfam" id="PF00728">
    <property type="entry name" value="Glyco_hydro_20"/>
    <property type="match status" value="1"/>
</dbReference>
<dbReference type="PRINTS" id="PR00738">
    <property type="entry name" value="GLHYDRLASE20"/>
</dbReference>
<dbReference type="SMART" id="SM01081">
    <property type="entry name" value="CHB_HEX"/>
    <property type="match status" value="1"/>
</dbReference>
<dbReference type="SUPFAM" id="SSF51445">
    <property type="entry name" value="(Trans)glycosidases"/>
    <property type="match status" value="1"/>
</dbReference>
<dbReference type="SUPFAM" id="SSF55545">
    <property type="entry name" value="beta-N-acetylhexosaminidase-like domain"/>
    <property type="match status" value="1"/>
</dbReference>
<dbReference type="SUPFAM" id="SSF49384">
    <property type="entry name" value="Carbohydrate-binding domain"/>
    <property type="match status" value="1"/>
</dbReference>
<reference evidence="6" key="1">
    <citation type="journal article" date="2010" name="Mol. Biol. Evol.">
        <title>Parallel evolution of nacre building gene sets in molluscs.</title>
        <authorList>
            <person name="Jackson D.J."/>
            <person name="McDougall C."/>
            <person name="Woodcroft B."/>
            <person name="Moase P."/>
            <person name="Rose R.A."/>
            <person name="Kube M."/>
            <person name="Reinhardt R."/>
            <person name="Rokhsar D.S."/>
            <person name="Montagnani C."/>
            <person name="Joubert C."/>
            <person name="Piquemal D."/>
            <person name="Degnan B.M."/>
        </authorList>
    </citation>
    <scope>NUCLEOTIDE SEQUENCE [MRNA]</scope>
    <scope>IDENTIFICATION</scope>
    <source>
        <tissue evidence="4">Mantle</tissue>
    </source>
</reference>
<reference key="2">
    <citation type="journal article" date="2012" name="Proc. Natl. Acad. Sci. U.S.A.">
        <title>Different secretory repertoires control the biomineralization processes of prism and nacre deposition of the pearl oyster shell.</title>
        <authorList>
            <person name="Marie B."/>
            <person name="Joubert C."/>
            <person name="Tayale A."/>
            <person name="Zanella-Cleon I."/>
            <person name="Belliard C."/>
            <person name="Piquemal D."/>
            <person name="Cochennec-Laureau N."/>
            <person name="Marin F."/>
            <person name="Gueguen Y."/>
            <person name="Montagnani C."/>
        </authorList>
    </citation>
    <scope>PROTEIN SEQUENCE OF 658-664; 761-767 AND 1005-1016</scope>
    <scope>SUBCELLULAR LOCATION</scope>
    <scope>TISSUE SPECIFICITY</scope>
    <source>
        <tissue>Shell</tissue>
    </source>
</reference>
<proteinExistence type="evidence at protein level"/>
<name>HEX_PINMA</name>
<sequence>MKWVKSGVGILGILLIICHAVTSQRRILDITDNLKITFKTISNFGPRAQSIQNVTIENVGIKDIPDFGWRCYFCHDQLLFPGTFNLARSQYFLRPILDNYVVLSDGFLLEFIKGCMYRITPIPRNAPIKTRDKREFTLLAEQFSVSKYDSFPNWYCETISGGNTEVANIRSTENLKYVEDFDSSYNWFRIPHDFRSVPLQPQDRYSANHKASSVEECKYKVIPTPVKASVRKVQRNFGTTVYYGTTDTSIRGKLFKVAEKLALKHKLGLVEMTPGQPVNNGISLVVTGNYIERNIPSPDEAYRLSVSADLISIEAPALPGLINGIETMHSLSAWDMALPYGGVKDFPRFPFRGIFLDIASNFPGYNYMMKFLTVMAQYKLNKLVLPLYNNEGFRLELNDSPGYEFQALHLVGGNRCHDLKEENCLFSQLGSFAGNSDGYLTKGDMVDLIKTADLLNIEIIMSLNIGESARGAIVPLKTSKHNRLLYDPEDTDFVDRFYPQKDSSMNPCREETMIFYDHMLKQLKAIYKAASVPLKTIMIGSKVNFDQVLNSKYCYPKNLNSTQRLMERENLERNINGFKLNFTKRLVKTAHDNGINEVMAIDDVFTTEFDAAGNTPNTVYDTVDSETNKTRFNATVTAVHSRYDTVRDERLWKRGDRFAELGYKVIISPPILDFNYAVEPDPDRPGDYDSVIRNISFSKLFRFVPDSHCCNIPNAIQHDCALESDCTTAGPPDSYIGTLGKLDTRKLRSLKDWNELLFPRLLIFAERSWHKSSWEDSFEPHRVRMNNITRQIITNYTVPNWNDIIQEESKVLGCISRKEKLRLMHEDGLKPYVEPPGARLLGGNTMRIAASTTEDSFWVQASVNGNPWTDNVKVLDVNPTDSVRLRTVHPAKAELRSKEVKLNLTSLPTPREQFRKIAQDALSRRIGIDIQRARMPPMPVNPTYRPPVPLPSFDPADDRAPDLAAIAAAHPPPLPPGMPPHMMPNMPFPPRPPFVPPLLPPGQMRALGQQAGQALRGQGQQTGQQTLPAQPRGPMGLTGQAAGTGVAGQSGQQPSAAGQGTQQGLPGQQRTGVVPGQWPFFPGMPAAQFPPMFNPQMQRALQMRGQGQIPQTQGAVAGAGQSRVPQQQAG</sequence>
<keyword id="KW-0903">Direct protein sequencing</keyword>
<keyword id="KW-0378">Hydrolase</keyword>
<keyword id="KW-0964">Secreted</keyword>
<keyword id="KW-0732">Signal</keyword>
<organism>
    <name type="scientific">Pinctada maxima</name>
    <name type="common">Silver-lipped pearl oyster</name>
    <name type="synonym">White-lipped pearl oyster</name>
    <dbReference type="NCBI Taxonomy" id="104660"/>
    <lineage>
        <taxon>Eukaryota</taxon>
        <taxon>Metazoa</taxon>
        <taxon>Spiralia</taxon>
        <taxon>Lophotrochozoa</taxon>
        <taxon>Mollusca</taxon>
        <taxon>Bivalvia</taxon>
        <taxon>Autobranchia</taxon>
        <taxon>Pteriomorphia</taxon>
        <taxon>Pterioida</taxon>
        <taxon>Pterioidea</taxon>
        <taxon>Pteriidae</taxon>
        <taxon>Pinctada</taxon>
    </lineage>
</organism>
<comment type="catalytic activity">
    <reaction evidence="1">
        <text>Hydrolysis of terminal non-reducing N-acetyl-D-hexosamine residues in N-acetyl-beta-D-hexosaminides.</text>
        <dbReference type="EC" id="3.2.1.52"/>
    </reaction>
</comment>
<comment type="pathway">
    <text evidence="1">Glycan degradation; chitin degradation.</text>
</comment>
<comment type="subcellular location">
    <subcellularLocation>
        <location evidence="5">Secreted</location>
    </subcellularLocation>
</comment>
<comment type="tissue specificity">
    <text evidence="5">Prismatic layer of shell (at protein level). Expressed primarily in the mantle with highest level in the mantle edge and lower level in the mantle pallium.</text>
</comment>
<comment type="similarity">
    <text evidence="6">Belongs to the glycosyl hydrolase 20 family.</text>
</comment>
<comment type="sequence caution" evidence="6">
    <conflict type="frameshift">
        <sequence resource="EMBL" id="GT279548"/>
    </conflict>
</comment>
<comment type="sequence caution" evidence="6">
    <conflict type="frameshift">
        <sequence resource="EMBL" id="GT280934"/>
    </conflict>
</comment>
<comment type="sequence caution" evidence="6">
    <conflict type="frameshift">
        <sequence resource="EMBL" id="GT282050"/>
    </conflict>
</comment>
<comment type="sequence caution" evidence="6">
    <conflict type="frameshift">
        <sequence resource="EMBL" id="GT282702"/>
    </conflict>
</comment>
<comment type="sequence caution" evidence="6">
    <conflict type="frameshift">
        <sequence resource="EMBL" id="GT282776"/>
    </conflict>
</comment>
<comment type="sequence caution" evidence="6">
    <conflict type="frameshift">
        <sequence resource="EMBL" id="GT283781"/>
    </conflict>
</comment>
<comment type="sequence caution" evidence="6">
    <conflict type="miscellaneous discrepancy">
        <sequence resource="EMBL" id="GT284443"/>
    </conflict>
    <text>Premature stop codon at position 218.</text>
</comment>
<feature type="signal peptide" evidence="2">
    <location>
        <begin position="1"/>
        <end position="23"/>
    </location>
</feature>
<feature type="chain" id="PRO_0000413087" description="Putative beta-hexosaminidase" evidence="2">
    <location>
        <begin position="24"/>
        <end position="1130"/>
    </location>
</feature>
<feature type="region of interest" description="Disordered" evidence="3">
    <location>
        <begin position="1001"/>
        <end position="1075"/>
    </location>
</feature>
<feature type="region of interest" description="Disordered" evidence="3">
    <location>
        <begin position="1102"/>
        <end position="1130"/>
    </location>
</feature>
<feature type="compositionally biased region" description="Low complexity" evidence="3">
    <location>
        <begin position="1001"/>
        <end position="1030"/>
    </location>
</feature>
<feature type="compositionally biased region" description="Low complexity" evidence="3">
    <location>
        <begin position="1037"/>
        <end position="1072"/>
    </location>
</feature>
<feature type="sequence conflict" description="In Ref. 1; GT281097." evidence="6" ref="1">
    <original>E</original>
    <variation>Q</variation>
    <location>
        <position position="391"/>
    </location>
</feature>
<feature type="sequence conflict" description="In Ref. 1; GT279548." evidence="6" ref="1">
    <original>D</original>
    <variation>S</variation>
    <location>
        <position position="487"/>
    </location>
</feature>
<feature type="sequence conflict" description="In Ref. 1; GT282050." evidence="6" ref="1">
    <original>M</original>
    <variation>L</variation>
    <location>
        <position position="538"/>
    </location>
</feature>
<feature type="sequence conflict" description="In Ref. 1; GT280934." evidence="6" ref="1">
    <original>N</original>
    <variation>H</variation>
    <location>
        <position position="614"/>
    </location>
</feature>
<feature type="sequence conflict" description="In Ref. 1; GT281082/GT282050/GT281480/GT279953." evidence="6" ref="1">
    <original>V</original>
    <variation>M</variation>
    <location>
        <position position="623"/>
    </location>
</feature>
<feature type="sequence conflict" description="In Ref. 1; GT284045." evidence="6" ref="1">
    <original>K</original>
    <variation>E</variation>
    <location>
        <position position="653"/>
    </location>
</feature>
<feature type="sequence conflict" description="In Ref. 1; GT279353." evidence="6" ref="1">
    <original>F</original>
    <variation>V</variation>
    <location>
        <position position="658"/>
    </location>
</feature>
<feature type="sequence conflict" description="In Ref. 1; GT279548." evidence="6" ref="1">
    <original>D</original>
    <variation>E</variation>
    <location>
        <position position="687"/>
    </location>
</feature>
<feature type="sequence conflict" description="In Ref. 1; GT279548." evidence="6" ref="1">
    <original>V</original>
    <variation>R</variation>
    <location>
        <position position="691"/>
    </location>
</feature>
<feature type="sequence conflict" description="In Ref. 1; GT278127." evidence="6" ref="1">
    <original>D</original>
    <variation>N</variation>
    <location>
        <position position="743"/>
    </location>
</feature>
<feature type="sequence conflict" description="In Ref. 1; GT282050." evidence="6" ref="1">
    <original>D</original>
    <variation>E</variation>
    <location>
        <position position="752"/>
    </location>
</feature>
<feature type="sequence conflict" description="In Ref. 1; GT282702/GT281480." evidence="6" ref="1">
    <original>Q</original>
    <variation>P</variation>
    <location>
        <position position="806"/>
    </location>
</feature>
<feature type="sequence conflict" description="In Ref. 1; GT282702." evidence="6" ref="1">
    <original>E</original>
    <variation>G</variation>
    <location>
        <position position="807"/>
    </location>
</feature>
<feature type="sequence conflict" description="In Ref. 1; GT284045." evidence="6" ref="1">
    <original>VNG</original>
    <variation>PSW</variation>
    <location>
        <begin position="863"/>
        <end position="865"/>
    </location>
</feature>
<feature type="sequence conflict" description="In Ref. 1; GT283781." evidence="6" ref="1">
    <original>NPWTDNVKVLD</original>
    <variation>SP</variation>
    <location>
        <begin position="866"/>
        <end position="876"/>
    </location>
</feature>
<feature type="sequence conflict" description="In Ref. 1; GT284045." evidence="6" ref="1">
    <original>DN</original>
    <variation>GH</variation>
    <location>
        <begin position="870"/>
        <end position="871"/>
    </location>
</feature>
<feature type="sequence conflict" description="In Ref. 1; GT279087." evidence="6" ref="1">
    <original>D</original>
    <variation>N</variation>
    <location>
        <position position="957"/>
    </location>
</feature>
<feature type="sequence conflict" description="In Ref. 1; GT279087." evidence="6" ref="1">
    <original>A</original>
    <variation>T</variation>
    <location>
        <position position="964"/>
    </location>
</feature>
<feature type="sequence conflict" description="In Ref. 1; GT283348." evidence="6" ref="1">
    <original>R</original>
    <variation>K</variation>
    <location>
        <position position="1104"/>
    </location>
</feature>
<protein>
    <recommendedName>
        <fullName>Putative beta-hexosaminidase</fullName>
        <ecNumber evidence="1">3.2.1.52</ecNumber>
    </recommendedName>
    <alternativeName>
        <fullName evidence="1">Beta-N-acetylhexosaminidase</fullName>
    </alternativeName>
    <alternativeName>
        <fullName evidence="1">Chitobiase</fullName>
    </alternativeName>
    <alternativeName>
        <fullName evidence="1">N-acetyl-beta-glucosaminidase</fullName>
    </alternativeName>
</protein>
<evidence type="ECO:0000250" key="1">
    <source>
        <dbReference type="UniProtKB" id="Q04786"/>
    </source>
</evidence>
<evidence type="ECO:0000255" key="2"/>
<evidence type="ECO:0000256" key="3">
    <source>
        <dbReference type="SAM" id="MobiDB-lite"/>
    </source>
</evidence>
<evidence type="ECO:0000269" key="4">
    <source>
    </source>
</evidence>
<evidence type="ECO:0000269" key="5">
    <source>
    </source>
</evidence>
<evidence type="ECO:0000305" key="6"/>
<accession>P86956</accession>